<protein>
    <recommendedName>
        <fullName evidence="1">3-dehydroquinate synthase</fullName>
        <shortName evidence="1">DHQS</shortName>
        <ecNumber evidence="1">4.2.3.4</ecNumber>
    </recommendedName>
</protein>
<comment type="function">
    <text evidence="1">Catalyzes the conversion of 3-deoxy-D-arabino-heptulosonate 7-phosphate (DAHP) to dehydroquinate (DHQ).</text>
</comment>
<comment type="catalytic activity">
    <reaction evidence="1">
        <text>7-phospho-2-dehydro-3-deoxy-D-arabino-heptonate = 3-dehydroquinate + phosphate</text>
        <dbReference type="Rhea" id="RHEA:21968"/>
        <dbReference type="ChEBI" id="CHEBI:32364"/>
        <dbReference type="ChEBI" id="CHEBI:43474"/>
        <dbReference type="ChEBI" id="CHEBI:58394"/>
        <dbReference type="EC" id="4.2.3.4"/>
    </reaction>
</comment>
<comment type="cofactor">
    <cofactor evidence="1">
        <name>Co(2+)</name>
        <dbReference type="ChEBI" id="CHEBI:48828"/>
    </cofactor>
    <cofactor evidence="1">
        <name>Zn(2+)</name>
        <dbReference type="ChEBI" id="CHEBI:29105"/>
    </cofactor>
    <text evidence="1">Binds 1 divalent metal cation per subunit. Can use either Co(2+) or Zn(2+).</text>
</comment>
<comment type="cofactor">
    <cofactor evidence="1">
        <name>NAD(+)</name>
        <dbReference type="ChEBI" id="CHEBI:57540"/>
    </cofactor>
</comment>
<comment type="pathway">
    <text evidence="1">Metabolic intermediate biosynthesis; chorismate biosynthesis; chorismate from D-erythrose 4-phosphate and phosphoenolpyruvate: step 2/7.</text>
</comment>
<comment type="subcellular location">
    <subcellularLocation>
        <location evidence="1">Cytoplasm</location>
    </subcellularLocation>
</comment>
<comment type="similarity">
    <text evidence="1">Belongs to the sugar phosphate cyclases superfamily. Dehydroquinate synthase family.</text>
</comment>
<accession>B5XTU7</accession>
<gene>
    <name evidence="1" type="primary">aroB</name>
    <name type="ordered locus">KPK_0356</name>
</gene>
<reference key="1">
    <citation type="journal article" date="2008" name="PLoS Genet.">
        <title>Complete genome sequence of the N2-fixing broad host range endophyte Klebsiella pneumoniae 342 and virulence predictions verified in mice.</title>
        <authorList>
            <person name="Fouts D.E."/>
            <person name="Tyler H.L."/>
            <person name="DeBoy R.T."/>
            <person name="Daugherty S."/>
            <person name="Ren Q."/>
            <person name="Badger J.H."/>
            <person name="Durkin A.S."/>
            <person name="Huot H."/>
            <person name="Shrivastava S."/>
            <person name="Kothari S."/>
            <person name="Dodson R.J."/>
            <person name="Mohamoud Y."/>
            <person name="Khouri H."/>
            <person name="Roesch L.F.W."/>
            <person name="Krogfelt K.A."/>
            <person name="Struve C."/>
            <person name="Triplett E.W."/>
            <person name="Methe B.A."/>
        </authorList>
    </citation>
    <scope>NUCLEOTIDE SEQUENCE [LARGE SCALE GENOMIC DNA]</scope>
    <source>
        <strain>342</strain>
    </source>
</reference>
<organism>
    <name type="scientific">Klebsiella pneumoniae (strain 342)</name>
    <dbReference type="NCBI Taxonomy" id="507522"/>
    <lineage>
        <taxon>Bacteria</taxon>
        <taxon>Pseudomonadati</taxon>
        <taxon>Pseudomonadota</taxon>
        <taxon>Gammaproteobacteria</taxon>
        <taxon>Enterobacterales</taxon>
        <taxon>Enterobacteriaceae</taxon>
        <taxon>Klebsiella/Raoultella group</taxon>
        <taxon>Klebsiella</taxon>
        <taxon>Klebsiella pneumoniae complex</taxon>
    </lineage>
</organism>
<evidence type="ECO:0000255" key="1">
    <source>
        <dbReference type="HAMAP-Rule" id="MF_00110"/>
    </source>
</evidence>
<keyword id="KW-0028">Amino-acid biosynthesis</keyword>
<keyword id="KW-0057">Aromatic amino acid biosynthesis</keyword>
<keyword id="KW-0170">Cobalt</keyword>
<keyword id="KW-0963">Cytoplasm</keyword>
<keyword id="KW-0456">Lyase</keyword>
<keyword id="KW-0479">Metal-binding</keyword>
<keyword id="KW-0520">NAD</keyword>
<keyword id="KW-0547">Nucleotide-binding</keyword>
<keyword id="KW-0862">Zinc</keyword>
<dbReference type="EC" id="4.2.3.4" evidence="1"/>
<dbReference type="EMBL" id="CP000964">
    <property type="protein sequence ID" value="ACI10245.1"/>
    <property type="molecule type" value="Genomic_DNA"/>
</dbReference>
<dbReference type="SMR" id="B5XTU7"/>
<dbReference type="KEGG" id="kpe:KPK_0356"/>
<dbReference type="HOGENOM" id="CLU_001201_0_2_6"/>
<dbReference type="UniPathway" id="UPA00053">
    <property type="reaction ID" value="UER00085"/>
</dbReference>
<dbReference type="Proteomes" id="UP000001734">
    <property type="component" value="Chromosome"/>
</dbReference>
<dbReference type="GO" id="GO:0005737">
    <property type="term" value="C:cytoplasm"/>
    <property type="evidence" value="ECO:0007669"/>
    <property type="project" value="UniProtKB-SubCell"/>
</dbReference>
<dbReference type="GO" id="GO:0003856">
    <property type="term" value="F:3-dehydroquinate synthase activity"/>
    <property type="evidence" value="ECO:0007669"/>
    <property type="project" value="UniProtKB-UniRule"/>
</dbReference>
<dbReference type="GO" id="GO:0046872">
    <property type="term" value="F:metal ion binding"/>
    <property type="evidence" value="ECO:0007669"/>
    <property type="project" value="UniProtKB-KW"/>
</dbReference>
<dbReference type="GO" id="GO:0000166">
    <property type="term" value="F:nucleotide binding"/>
    <property type="evidence" value="ECO:0007669"/>
    <property type="project" value="UniProtKB-KW"/>
</dbReference>
<dbReference type="GO" id="GO:0008652">
    <property type="term" value="P:amino acid biosynthetic process"/>
    <property type="evidence" value="ECO:0007669"/>
    <property type="project" value="UniProtKB-KW"/>
</dbReference>
<dbReference type="GO" id="GO:0009073">
    <property type="term" value="P:aromatic amino acid family biosynthetic process"/>
    <property type="evidence" value="ECO:0007669"/>
    <property type="project" value="UniProtKB-KW"/>
</dbReference>
<dbReference type="GO" id="GO:0009423">
    <property type="term" value="P:chorismate biosynthetic process"/>
    <property type="evidence" value="ECO:0007669"/>
    <property type="project" value="UniProtKB-UniRule"/>
</dbReference>
<dbReference type="CDD" id="cd08195">
    <property type="entry name" value="DHQS"/>
    <property type="match status" value="1"/>
</dbReference>
<dbReference type="FunFam" id="1.20.1090.10:FF:000002">
    <property type="entry name" value="3-dehydroquinate synthase"/>
    <property type="match status" value="1"/>
</dbReference>
<dbReference type="FunFam" id="3.40.50.1970:FF:000001">
    <property type="entry name" value="3-dehydroquinate synthase"/>
    <property type="match status" value="1"/>
</dbReference>
<dbReference type="Gene3D" id="3.40.50.1970">
    <property type="match status" value="1"/>
</dbReference>
<dbReference type="Gene3D" id="1.20.1090.10">
    <property type="entry name" value="Dehydroquinate synthase-like - alpha domain"/>
    <property type="match status" value="1"/>
</dbReference>
<dbReference type="HAMAP" id="MF_00110">
    <property type="entry name" value="DHQ_synthase"/>
    <property type="match status" value="1"/>
</dbReference>
<dbReference type="InterPro" id="IPR050071">
    <property type="entry name" value="Dehydroquinate_synthase"/>
</dbReference>
<dbReference type="InterPro" id="IPR016037">
    <property type="entry name" value="DHQ_synth_AroB"/>
</dbReference>
<dbReference type="InterPro" id="IPR030963">
    <property type="entry name" value="DHQ_synth_fam"/>
</dbReference>
<dbReference type="InterPro" id="IPR030960">
    <property type="entry name" value="DHQS/DOIS_N"/>
</dbReference>
<dbReference type="InterPro" id="IPR056179">
    <property type="entry name" value="DHQS_C"/>
</dbReference>
<dbReference type="NCBIfam" id="TIGR01357">
    <property type="entry name" value="aroB"/>
    <property type="match status" value="1"/>
</dbReference>
<dbReference type="PANTHER" id="PTHR43622">
    <property type="entry name" value="3-DEHYDROQUINATE SYNTHASE"/>
    <property type="match status" value="1"/>
</dbReference>
<dbReference type="PANTHER" id="PTHR43622:SF7">
    <property type="entry name" value="3-DEHYDROQUINATE SYNTHASE, CHLOROPLASTIC"/>
    <property type="match status" value="1"/>
</dbReference>
<dbReference type="Pfam" id="PF01761">
    <property type="entry name" value="DHQ_synthase"/>
    <property type="match status" value="1"/>
</dbReference>
<dbReference type="Pfam" id="PF24621">
    <property type="entry name" value="DHQS_C"/>
    <property type="match status" value="1"/>
</dbReference>
<dbReference type="PIRSF" id="PIRSF001455">
    <property type="entry name" value="DHQ_synth"/>
    <property type="match status" value="1"/>
</dbReference>
<dbReference type="SUPFAM" id="SSF56796">
    <property type="entry name" value="Dehydroquinate synthase-like"/>
    <property type="match status" value="1"/>
</dbReference>
<feature type="chain" id="PRO_1000094536" description="3-dehydroquinate synthase">
    <location>
        <begin position="1"/>
        <end position="364"/>
    </location>
</feature>
<feature type="binding site" evidence="1">
    <location>
        <begin position="71"/>
        <end position="76"/>
    </location>
    <ligand>
        <name>NAD(+)</name>
        <dbReference type="ChEBI" id="CHEBI:57540"/>
    </ligand>
</feature>
<feature type="binding site" evidence="1">
    <location>
        <begin position="105"/>
        <end position="109"/>
    </location>
    <ligand>
        <name>NAD(+)</name>
        <dbReference type="ChEBI" id="CHEBI:57540"/>
    </ligand>
</feature>
<feature type="binding site" evidence="1">
    <location>
        <begin position="129"/>
        <end position="130"/>
    </location>
    <ligand>
        <name>NAD(+)</name>
        <dbReference type="ChEBI" id="CHEBI:57540"/>
    </ligand>
</feature>
<feature type="binding site" evidence="1">
    <location>
        <position position="142"/>
    </location>
    <ligand>
        <name>NAD(+)</name>
        <dbReference type="ChEBI" id="CHEBI:57540"/>
    </ligand>
</feature>
<feature type="binding site" evidence="1">
    <location>
        <position position="151"/>
    </location>
    <ligand>
        <name>NAD(+)</name>
        <dbReference type="ChEBI" id="CHEBI:57540"/>
    </ligand>
</feature>
<feature type="binding site" evidence="1">
    <location>
        <begin position="169"/>
        <end position="172"/>
    </location>
    <ligand>
        <name>NAD(+)</name>
        <dbReference type="ChEBI" id="CHEBI:57540"/>
    </ligand>
</feature>
<feature type="binding site" evidence="1">
    <location>
        <position position="184"/>
    </location>
    <ligand>
        <name>Zn(2+)</name>
        <dbReference type="ChEBI" id="CHEBI:29105"/>
    </ligand>
</feature>
<feature type="binding site" evidence="1">
    <location>
        <position position="247"/>
    </location>
    <ligand>
        <name>Zn(2+)</name>
        <dbReference type="ChEBI" id="CHEBI:29105"/>
    </ligand>
</feature>
<feature type="binding site" evidence="1">
    <location>
        <position position="264"/>
    </location>
    <ligand>
        <name>Zn(2+)</name>
        <dbReference type="ChEBI" id="CHEBI:29105"/>
    </ligand>
</feature>
<proteinExistence type="inferred from homology"/>
<name>AROB_KLEP3</name>
<sequence>MERLTVTLGERSYPITIAAGLFNDPASFLPLKSGDQAMLVTNETLAPLYLDTVRSVLEQAGVNVDSVILPDGEQYKSLAVMDTVFTALLQKPHGRDTTLVALGGGVIGDLTGFAAASYQRGVRFIQVPTTLLSQVDSSVGGKTAVNHPLGKNMIGAFWQPVSVVVDLNCLKTLPARELASGLAEVIKYGVILDGEFFSWLENNIDALLALDEKAMAYCIRRCCELKAEVVAADERETGLRALLNLGHTFGHAIEAEMGYGNWLHGEAVAAGMVMAAHTSERLGQFRAQDTQRIIDLLKRAGLPVRGPQEMSAQAYLPHMMRDKKVLAGDMRLVLPLAIGSSELRGGVPHDVVLGAIADTQQAQQ</sequence>